<dbReference type="EC" id="6.3.2.6" evidence="1"/>
<dbReference type="EMBL" id="CP000880">
    <property type="protein sequence ID" value="ABX20332.1"/>
    <property type="molecule type" value="Genomic_DNA"/>
</dbReference>
<dbReference type="SMR" id="A9MHQ4"/>
<dbReference type="STRING" id="41514.SARI_00395"/>
<dbReference type="KEGG" id="ses:SARI_00395"/>
<dbReference type="HOGENOM" id="CLU_061495_2_1_6"/>
<dbReference type="UniPathway" id="UPA00074">
    <property type="reaction ID" value="UER00131"/>
</dbReference>
<dbReference type="Proteomes" id="UP000002084">
    <property type="component" value="Chromosome"/>
</dbReference>
<dbReference type="GO" id="GO:0005829">
    <property type="term" value="C:cytosol"/>
    <property type="evidence" value="ECO:0007669"/>
    <property type="project" value="TreeGrafter"/>
</dbReference>
<dbReference type="GO" id="GO:0005524">
    <property type="term" value="F:ATP binding"/>
    <property type="evidence" value="ECO:0007669"/>
    <property type="project" value="UniProtKB-KW"/>
</dbReference>
<dbReference type="GO" id="GO:0004639">
    <property type="term" value="F:phosphoribosylaminoimidazolesuccinocarboxamide synthase activity"/>
    <property type="evidence" value="ECO:0007669"/>
    <property type="project" value="UniProtKB-UniRule"/>
</dbReference>
<dbReference type="GO" id="GO:0006189">
    <property type="term" value="P:'de novo' IMP biosynthetic process"/>
    <property type="evidence" value="ECO:0007669"/>
    <property type="project" value="UniProtKB-UniRule"/>
</dbReference>
<dbReference type="GO" id="GO:0009236">
    <property type="term" value="P:cobalamin biosynthetic process"/>
    <property type="evidence" value="ECO:0007669"/>
    <property type="project" value="InterPro"/>
</dbReference>
<dbReference type="CDD" id="cd01415">
    <property type="entry name" value="SAICAR_synt_PurC"/>
    <property type="match status" value="1"/>
</dbReference>
<dbReference type="FunFam" id="3.30.200.20:FF:000086">
    <property type="entry name" value="Phosphoribosylaminoimidazole-succinocarboxamide synthase"/>
    <property type="match status" value="1"/>
</dbReference>
<dbReference type="FunFam" id="3.30.470.20:FF:000006">
    <property type="entry name" value="Phosphoribosylaminoimidazole-succinocarboxamide synthase"/>
    <property type="match status" value="1"/>
</dbReference>
<dbReference type="Gene3D" id="3.30.470.20">
    <property type="entry name" value="ATP-grasp fold, B domain"/>
    <property type="match status" value="1"/>
</dbReference>
<dbReference type="Gene3D" id="3.30.200.20">
    <property type="entry name" value="Phosphorylase Kinase, domain 1"/>
    <property type="match status" value="1"/>
</dbReference>
<dbReference type="HAMAP" id="MF_00137">
    <property type="entry name" value="SAICAR_synth"/>
    <property type="match status" value="1"/>
</dbReference>
<dbReference type="InterPro" id="IPR028923">
    <property type="entry name" value="SAICAR_synt/ADE2_N"/>
</dbReference>
<dbReference type="InterPro" id="IPR033934">
    <property type="entry name" value="SAICAR_synt_PurC"/>
</dbReference>
<dbReference type="InterPro" id="IPR001636">
    <property type="entry name" value="SAICAR_synth"/>
</dbReference>
<dbReference type="InterPro" id="IPR050089">
    <property type="entry name" value="SAICAR_synthetase"/>
</dbReference>
<dbReference type="InterPro" id="IPR018236">
    <property type="entry name" value="SAICAR_synthetase_CS"/>
</dbReference>
<dbReference type="NCBIfam" id="TIGR00081">
    <property type="entry name" value="purC"/>
    <property type="match status" value="1"/>
</dbReference>
<dbReference type="PANTHER" id="PTHR43599">
    <property type="entry name" value="MULTIFUNCTIONAL PROTEIN ADE2"/>
    <property type="match status" value="1"/>
</dbReference>
<dbReference type="PANTHER" id="PTHR43599:SF3">
    <property type="entry name" value="SI:DKEY-6E2.2"/>
    <property type="match status" value="1"/>
</dbReference>
<dbReference type="Pfam" id="PF01259">
    <property type="entry name" value="SAICAR_synt"/>
    <property type="match status" value="1"/>
</dbReference>
<dbReference type="SUPFAM" id="SSF56104">
    <property type="entry name" value="SAICAR synthase-like"/>
    <property type="match status" value="1"/>
</dbReference>
<dbReference type="PROSITE" id="PS01057">
    <property type="entry name" value="SAICAR_SYNTHETASE_1"/>
    <property type="match status" value="1"/>
</dbReference>
<dbReference type="PROSITE" id="PS01058">
    <property type="entry name" value="SAICAR_SYNTHETASE_2"/>
    <property type="match status" value="1"/>
</dbReference>
<organism>
    <name type="scientific">Salmonella arizonae (strain ATCC BAA-731 / CDC346-86 / RSK2980)</name>
    <dbReference type="NCBI Taxonomy" id="41514"/>
    <lineage>
        <taxon>Bacteria</taxon>
        <taxon>Pseudomonadati</taxon>
        <taxon>Pseudomonadota</taxon>
        <taxon>Gammaproteobacteria</taxon>
        <taxon>Enterobacterales</taxon>
        <taxon>Enterobacteriaceae</taxon>
        <taxon>Salmonella</taxon>
    </lineage>
</organism>
<name>PUR7_SALAR</name>
<reference key="1">
    <citation type="submission" date="2007-11" db="EMBL/GenBank/DDBJ databases">
        <authorList>
            <consortium name="The Salmonella enterica serovar Arizonae Genome Sequencing Project"/>
            <person name="McClelland M."/>
            <person name="Sanderson E.K."/>
            <person name="Porwollik S."/>
            <person name="Spieth J."/>
            <person name="Clifton W.S."/>
            <person name="Fulton R."/>
            <person name="Chunyan W."/>
            <person name="Wollam A."/>
            <person name="Shah N."/>
            <person name="Pepin K."/>
            <person name="Bhonagiri V."/>
            <person name="Nash W."/>
            <person name="Johnson M."/>
            <person name="Thiruvilangam P."/>
            <person name="Wilson R."/>
        </authorList>
    </citation>
    <scope>NUCLEOTIDE SEQUENCE [LARGE SCALE GENOMIC DNA]</scope>
    <source>
        <strain>ATCC BAA-731 / CDC346-86 / RSK2980</strain>
    </source>
</reference>
<sequence>MQKQAELYRGKAKTVYSTENPDLLVLEFRNDTSAGDGARIEKFDRKGMVNNKFNHFIMTKLAEAGIPTQMERLLSDTECLVKKLEMVPVECVVRNRAAGSLVKRLGVEEGMELNPPIFDLFLKNDALHDPMVNSSYCETFGWVSQENLARMKALTYKANDVLKKLFDDAGLILVDFKLEFGLYKGEVVLGDEFSPDGSRLWDKETLDKMDKDRFRQSLGGLIEAYEAVARRLGVKLD</sequence>
<feature type="chain" id="PRO_1000076466" description="Phosphoribosylaminoimidazole-succinocarboxamide synthase">
    <location>
        <begin position="1"/>
        <end position="237"/>
    </location>
</feature>
<gene>
    <name evidence="1" type="primary">purC</name>
    <name type="ordered locus">SARI_00395</name>
</gene>
<proteinExistence type="inferred from homology"/>
<accession>A9MHQ4</accession>
<keyword id="KW-0067">ATP-binding</keyword>
<keyword id="KW-0436">Ligase</keyword>
<keyword id="KW-0547">Nucleotide-binding</keyword>
<keyword id="KW-0658">Purine biosynthesis</keyword>
<keyword id="KW-1185">Reference proteome</keyword>
<comment type="catalytic activity">
    <reaction evidence="1">
        <text>5-amino-1-(5-phospho-D-ribosyl)imidazole-4-carboxylate + L-aspartate + ATP = (2S)-2-[5-amino-1-(5-phospho-beta-D-ribosyl)imidazole-4-carboxamido]succinate + ADP + phosphate + 2 H(+)</text>
        <dbReference type="Rhea" id="RHEA:22628"/>
        <dbReference type="ChEBI" id="CHEBI:15378"/>
        <dbReference type="ChEBI" id="CHEBI:29991"/>
        <dbReference type="ChEBI" id="CHEBI:30616"/>
        <dbReference type="ChEBI" id="CHEBI:43474"/>
        <dbReference type="ChEBI" id="CHEBI:58443"/>
        <dbReference type="ChEBI" id="CHEBI:77657"/>
        <dbReference type="ChEBI" id="CHEBI:456216"/>
        <dbReference type="EC" id="6.3.2.6"/>
    </reaction>
</comment>
<comment type="pathway">
    <text evidence="1">Purine metabolism; IMP biosynthesis via de novo pathway; 5-amino-1-(5-phospho-D-ribosyl)imidazole-4-carboxamide from 5-amino-1-(5-phospho-D-ribosyl)imidazole-4-carboxylate: step 1/2.</text>
</comment>
<comment type="similarity">
    <text evidence="1">Belongs to the SAICAR synthetase family.</text>
</comment>
<protein>
    <recommendedName>
        <fullName evidence="1">Phosphoribosylaminoimidazole-succinocarboxamide synthase</fullName>
        <ecNumber evidence="1">6.3.2.6</ecNumber>
    </recommendedName>
    <alternativeName>
        <fullName evidence="1">SAICAR synthetase</fullName>
    </alternativeName>
</protein>
<evidence type="ECO:0000255" key="1">
    <source>
        <dbReference type="HAMAP-Rule" id="MF_00137"/>
    </source>
</evidence>